<gene>
    <name evidence="1" type="primary">accD</name>
    <name type="ordered locus">Avi_0022</name>
</gene>
<evidence type="ECO:0000255" key="1">
    <source>
        <dbReference type="HAMAP-Rule" id="MF_01395"/>
    </source>
</evidence>
<evidence type="ECO:0000255" key="2">
    <source>
        <dbReference type="PROSITE-ProRule" id="PRU01136"/>
    </source>
</evidence>
<keyword id="KW-0067">ATP-binding</keyword>
<keyword id="KW-0963">Cytoplasm</keyword>
<keyword id="KW-0275">Fatty acid biosynthesis</keyword>
<keyword id="KW-0276">Fatty acid metabolism</keyword>
<keyword id="KW-0444">Lipid biosynthesis</keyword>
<keyword id="KW-0443">Lipid metabolism</keyword>
<keyword id="KW-0547">Nucleotide-binding</keyword>
<keyword id="KW-1185">Reference proteome</keyword>
<keyword id="KW-0808">Transferase</keyword>
<reference key="1">
    <citation type="journal article" date="2009" name="J. Bacteriol.">
        <title>Genome sequences of three Agrobacterium biovars help elucidate the evolution of multichromosome genomes in bacteria.</title>
        <authorList>
            <person name="Slater S.C."/>
            <person name="Goldman B.S."/>
            <person name="Goodner B."/>
            <person name="Setubal J.C."/>
            <person name="Farrand S.K."/>
            <person name="Nester E.W."/>
            <person name="Burr T.J."/>
            <person name="Banta L."/>
            <person name="Dickerman A.W."/>
            <person name="Paulsen I."/>
            <person name="Otten L."/>
            <person name="Suen G."/>
            <person name="Welch R."/>
            <person name="Almeida N.F."/>
            <person name="Arnold F."/>
            <person name="Burton O.T."/>
            <person name="Du Z."/>
            <person name="Ewing A."/>
            <person name="Godsy E."/>
            <person name="Heisel S."/>
            <person name="Houmiel K.L."/>
            <person name="Jhaveri J."/>
            <person name="Lu J."/>
            <person name="Miller N.M."/>
            <person name="Norton S."/>
            <person name="Chen Q."/>
            <person name="Phoolcharoen W."/>
            <person name="Ohlin V."/>
            <person name="Ondrusek D."/>
            <person name="Pride N."/>
            <person name="Stricklin S.L."/>
            <person name="Sun J."/>
            <person name="Wheeler C."/>
            <person name="Wilson L."/>
            <person name="Zhu H."/>
            <person name="Wood D.W."/>
        </authorList>
    </citation>
    <scope>NUCLEOTIDE SEQUENCE [LARGE SCALE GENOMIC DNA]</scope>
    <source>
        <strain>ATCC BAA-846 / DSM 112012 / S4</strain>
    </source>
</reference>
<name>ACCD_ALLAM</name>
<sequence length="306" mass="33572">MNWITNYVRPRINSMLGRRDVPDNLWIKCPETGEMVFHKDLEENKWVVPASGYHMKMPAKARLADLFDGGKYEAFAQPKVAQDPLKFRDSKKYSDRLKDSRTKTEQEDTIVAGLGTVEGLKLVAVVHEFNFMGGSLGIAAGEAIVKAFERAIAEKCPLVMFPASGGARMQEGILSLMQLPRTTVAVDLLKEAGLPYIVVLTNPTTGGVTASYAMLGDLHIAEPGAEICFAGKRVIEQTIREKLPEGFQTSEYLLEHGMVDMVVKRHDIPATLARTLKILTKQPATVVGANDDKTLSVIEASRAVSA</sequence>
<protein>
    <recommendedName>
        <fullName evidence="1">Acetyl-coenzyme A carboxylase carboxyl transferase subunit beta</fullName>
        <shortName evidence="1">ACCase subunit beta</shortName>
        <shortName evidence="1">Acetyl-CoA carboxylase carboxyltransferase subunit beta</shortName>
        <ecNumber evidence="1">2.1.3.15</ecNumber>
    </recommendedName>
</protein>
<dbReference type="EC" id="2.1.3.15" evidence="1"/>
<dbReference type="EMBL" id="CP000633">
    <property type="protein sequence ID" value="ACM34988.1"/>
    <property type="molecule type" value="Genomic_DNA"/>
</dbReference>
<dbReference type="RefSeq" id="WP_012654518.1">
    <property type="nucleotide sequence ID" value="NC_011989.1"/>
</dbReference>
<dbReference type="SMR" id="B9JXV8"/>
<dbReference type="STRING" id="311402.Avi_0022"/>
<dbReference type="KEGG" id="avi:Avi_0022"/>
<dbReference type="eggNOG" id="COG0777">
    <property type="taxonomic scope" value="Bacteria"/>
</dbReference>
<dbReference type="HOGENOM" id="CLU_015486_1_0_5"/>
<dbReference type="UniPathway" id="UPA00655">
    <property type="reaction ID" value="UER00711"/>
</dbReference>
<dbReference type="Proteomes" id="UP000001596">
    <property type="component" value="Chromosome 1"/>
</dbReference>
<dbReference type="GO" id="GO:0009329">
    <property type="term" value="C:acetate CoA-transferase complex"/>
    <property type="evidence" value="ECO:0007669"/>
    <property type="project" value="TreeGrafter"/>
</dbReference>
<dbReference type="GO" id="GO:0003989">
    <property type="term" value="F:acetyl-CoA carboxylase activity"/>
    <property type="evidence" value="ECO:0007669"/>
    <property type="project" value="InterPro"/>
</dbReference>
<dbReference type="GO" id="GO:0005524">
    <property type="term" value="F:ATP binding"/>
    <property type="evidence" value="ECO:0007669"/>
    <property type="project" value="UniProtKB-KW"/>
</dbReference>
<dbReference type="GO" id="GO:0016743">
    <property type="term" value="F:carboxyl- or carbamoyltransferase activity"/>
    <property type="evidence" value="ECO:0007669"/>
    <property type="project" value="UniProtKB-UniRule"/>
</dbReference>
<dbReference type="GO" id="GO:0006633">
    <property type="term" value="P:fatty acid biosynthetic process"/>
    <property type="evidence" value="ECO:0007669"/>
    <property type="project" value="UniProtKB-KW"/>
</dbReference>
<dbReference type="GO" id="GO:2001295">
    <property type="term" value="P:malonyl-CoA biosynthetic process"/>
    <property type="evidence" value="ECO:0007669"/>
    <property type="project" value="UniProtKB-UniRule"/>
</dbReference>
<dbReference type="Gene3D" id="3.90.226.10">
    <property type="entry name" value="2-enoyl-CoA Hydratase, Chain A, domain 1"/>
    <property type="match status" value="1"/>
</dbReference>
<dbReference type="HAMAP" id="MF_01395">
    <property type="entry name" value="AcetylCoA_CT_beta"/>
    <property type="match status" value="1"/>
</dbReference>
<dbReference type="InterPro" id="IPR034733">
    <property type="entry name" value="AcCoA_carboxyl_beta"/>
</dbReference>
<dbReference type="InterPro" id="IPR000438">
    <property type="entry name" value="Acetyl_CoA_COase_Trfase_b_su"/>
</dbReference>
<dbReference type="InterPro" id="IPR029045">
    <property type="entry name" value="ClpP/crotonase-like_dom_sf"/>
</dbReference>
<dbReference type="InterPro" id="IPR011762">
    <property type="entry name" value="COA_CT_N"/>
</dbReference>
<dbReference type="NCBIfam" id="TIGR00515">
    <property type="entry name" value="accD"/>
    <property type="match status" value="1"/>
</dbReference>
<dbReference type="PANTHER" id="PTHR42995">
    <property type="entry name" value="ACETYL-COENZYME A CARBOXYLASE CARBOXYL TRANSFERASE SUBUNIT BETA, CHLOROPLASTIC"/>
    <property type="match status" value="1"/>
</dbReference>
<dbReference type="PANTHER" id="PTHR42995:SF5">
    <property type="entry name" value="ACETYL-COENZYME A CARBOXYLASE CARBOXYL TRANSFERASE SUBUNIT BETA, CHLOROPLASTIC"/>
    <property type="match status" value="1"/>
</dbReference>
<dbReference type="Pfam" id="PF01039">
    <property type="entry name" value="Carboxyl_trans"/>
    <property type="match status" value="1"/>
</dbReference>
<dbReference type="PRINTS" id="PR01070">
    <property type="entry name" value="ACCCTRFRASEB"/>
</dbReference>
<dbReference type="SUPFAM" id="SSF52096">
    <property type="entry name" value="ClpP/crotonase"/>
    <property type="match status" value="1"/>
</dbReference>
<dbReference type="PROSITE" id="PS50980">
    <property type="entry name" value="COA_CT_NTER"/>
    <property type="match status" value="1"/>
</dbReference>
<proteinExistence type="inferred from homology"/>
<comment type="function">
    <text evidence="1">Component of the acetyl coenzyme A carboxylase (ACC) complex. Biotin carboxylase (BC) catalyzes the carboxylation of biotin on its carrier protein (BCCP) and then the CO(2) group is transferred by the transcarboxylase to acetyl-CoA to form malonyl-CoA.</text>
</comment>
<comment type="catalytic activity">
    <reaction evidence="1">
        <text>N(6)-carboxybiotinyl-L-lysyl-[protein] + acetyl-CoA = N(6)-biotinyl-L-lysyl-[protein] + malonyl-CoA</text>
        <dbReference type="Rhea" id="RHEA:54728"/>
        <dbReference type="Rhea" id="RHEA-COMP:10505"/>
        <dbReference type="Rhea" id="RHEA-COMP:10506"/>
        <dbReference type="ChEBI" id="CHEBI:57288"/>
        <dbReference type="ChEBI" id="CHEBI:57384"/>
        <dbReference type="ChEBI" id="CHEBI:83144"/>
        <dbReference type="ChEBI" id="CHEBI:83145"/>
        <dbReference type="EC" id="2.1.3.15"/>
    </reaction>
</comment>
<comment type="pathway">
    <text evidence="1">Lipid metabolism; malonyl-CoA biosynthesis; malonyl-CoA from acetyl-CoA: step 1/1.</text>
</comment>
<comment type="subunit">
    <text evidence="1">Acetyl-CoA carboxylase is a heterohexamer composed of biotin carboxyl carrier protein (AccB), biotin carboxylase (AccC) and two subunits each of ACCase subunit alpha (AccA) and ACCase subunit beta (AccD).</text>
</comment>
<comment type="subcellular location">
    <subcellularLocation>
        <location evidence="1">Cytoplasm</location>
    </subcellularLocation>
</comment>
<comment type="similarity">
    <text evidence="1">Belongs to the AccD/PCCB family.</text>
</comment>
<organism>
    <name type="scientific">Allorhizobium ampelinum (strain ATCC BAA-846 / DSM 112012 / S4)</name>
    <name type="common">Agrobacterium vitis (strain S4)</name>
    <dbReference type="NCBI Taxonomy" id="311402"/>
    <lineage>
        <taxon>Bacteria</taxon>
        <taxon>Pseudomonadati</taxon>
        <taxon>Pseudomonadota</taxon>
        <taxon>Alphaproteobacteria</taxon>
        <taxon>Hyphomicrobiales</taxon>
        <taxon>Rhizobiaceae</taxon>
        <taxon>Rhizobium/Agrobacterium group</taxon>
        <taxon>Allorhizobium</taxon>
        <taxon>Allorhizobium ampelinum</taxon>
    </lineage>
</organism>
<feature type="chain" id="PRO_0000389663" description="Acetyl-coenzyme A carboxylase carboxyl transferase subunit beta">
    <location>
        <begin position="1"/>
        <end position="306"/>
    </location>
</feature>
<feature type="domain" description="CoA carboxyltransferase N-terminal" evidence="2">
    <location>
        <begin position="25"/>
        <end position="294"/>
    </location>
</feature>
<accession>B9JXV8</accession>